<name>ATG8_MYCMD</name>
<gene>
    <name type="primary">ATG8</name>
    <name type="ORF">UMAG_05567</name>
</gene>
<organism>
    <name type="scientific">Mycosarcoma maydis</name>
    <name type="common">Corn smut fungus</name>
    <name type="synonym">Ustilago maydis</name>
    <dbReference type="NCBI Taxonomy" id="5270"/>
    <lineage>
        <taxon>Eukaryota</taxon>
        <taxon>Fungi</taxon>
        <taxon>Dikarya</taxon>
        <taxon>Basidiomycota</taxon>
        <taxon>Ustilaginomycotina</taxon>
        <taxon>Ustilaginomycetes</taxon>
        <taxon>Ustilaginales</taxon>
        <taxon>Ustilaginaceae</taxon>
        <taxon>Mycosarcoma</taxon>
    </lineage>
</organism>
<reference key="1">
    <citation type="journal article" date="2006" name="Nature">
        <title>Insights from the genome of the biotrophic fungal plant pathogen Ustilago maydis.</title>
        <authorList>
            <person name="Kaemper J."/>
            <person name="Kahmann R."/>
            <person name="Boelker M."/>
            <person name="Ma L.-J."/>
            <person name="Brefort T."/>
            <person name="Saville B.J."/>
            <person name="Banuett F."/>
            <person name="Kronstad J.W."/>
            <person name="Gold S.E."/>
            <person name="Mueller O."/>
            <person name="Perlin M.H."/>
            <person name="Woesten H.A.B."/>
            <person name="de Vries R."/>
            <person name="Ruiz-Herrera J."/>
            <person name="Reynaga-Pena C.G."/>
            <person name="Snetselaar K."/>
            <person name="McCann M."/>
            <person name="Perez-Martin J."/>
            <person name="Feldbruegge M."/>
            <person name="Basse C.W."/>
            <person name="Steinberg G."/>
            <person name="Ibeas J.I."/>
            <person name="Holloman W."/>
            <person name="Guzman P."/>
            <person name="Farman M.L."/>
            <person name="Stajich J.E."/>
            <person name="Sentandreu R."/>
            <person name="Gonzalez-Prieto J.M."/>
            <person name="Kennell J.C."/>
            <person name="Molina L."/>
            <person name="Schirawski J."/>
            <person name="Mendoza-Mendoza A."/>
            <person name="Greilinger D."/>
            <person name="Muench K."/>
            <person name="Roessel N."/>
            <person name="Scherer M."/>
            <person name="Vranes M."/>
            <person name="Ladendorf O."/>
            <person name="Vincon V."/>
            <person name="Fuchs U."/>
            <person name="Sandrock B."/>
            <person name="Meng S."/>
            <person name="Ho E.C.H."/>
            <person name="Cahill M.J."/>
            <person name="Boyce K.J."/>
            <person name="Klose J."/>
            <person name="Klosterman S.J."/>
            <person name="Deelstra H.J."/>
            <person name="Ortiz-Castellanos L."/>
            <person name="Li W."/>
            <person name="Sanchez-Alonso P."/>
            <person name="Schreier P.H."/>
            <person name="Haeuser-Hahn I."/>
            <person name="Vaupel M."/>
            <person name="Koopmann E."/>
            <person name="Friedrich G."/>
            <person name="Voss H."/>
            <person name="Schlueter T."/>
            <person name="Margolis J."/>
            <person name="Platt D."/>
            <person name="Swimmer C."/>
            <person name="Gnirke A."/>
            <person name="Chen F."/>
            <person name="Vysotskaia V."/>
            <person name="Mannhaupt G."/>
            <person name="Gueldener U."/>
            <person name="Muensterkoetter M."/>
            <person name="Haase D."/>
            <person name="Oesterheld M."/>
            <person name="Mewes H.-W."/>
            <person name="Mauceli E.W."/>
            <person name="DeCaprio D."/>
            <person name="Wade C.M."/>
            <person name="Butler J."/>
            <person name="Young S.K."/>
            <person name="Jaffe D.B."/>
            <person name="Calvo S.E."/>
            <person name="Nusbaum C."/>
            <person name="Galagan J.E."/>
            <person name="Birren B.W."/>
        </authorList>
    </citation>
    <scope>NUCLEOTIDE SEQUENCE [LARGE SCALE GENOMIC DNA]</scope>
    <source>
        <strain>DSM 14603 / FGSC 9021 / UM521</strain>
    </source>
</reference>
<reference key="2">
    <citation type="submission" date="2014-09" db="EMBL/GenBank/DDBJ databases">
        <authorList>
            <person name="Gueldener U."/>
            <person name="Muensterkoetter M."/>
            <person name="Walter M.C."/>
            <person name="Mannhaupt G."/>
            <person name="Kahmann R."/>
        </authorList>
    </citation>
    <scope>GENOME REANNOTATION</scope>
    <source>
        <strain>DSM 14603 / FGSC 9021 / UM521</strain>
    </source>
</reference>
<reference key="3">
    <citation type="journal article" date="2010" name="Mol. Plant Pathol.">
        <title>The autophagy genes ATG8 and ATG1 affect morphogenesis and pathogenicity in Ustilago maydis.</title>
        <authorList>
            <person name="Nadal M."/>
            <person name="Gold S.E."/>
        </authorList>
    </citation>
    <scope>FUNCTION</scope>
    <scope>INDUCTION</scope>
    <scope>DISRUPTION PHENOTYPE</scope>
</reference>
<reference key="4">
    <citation type="journal article" date="2012" name="Eukaryot. Cell">
        <title>The mitochondrial Dnm1-like fission component is required for lgA2-induced mitophagy but dispensable for starvation-induced mitophagy in Ustilago maydis.</title>
        <authorList>
            <person name="Nieto-Jacobo F."/>
            <person name="Pasch D."/>
            <person name="Basse C.W."/>
        </authorList>
    </citation>
    <scope>FUNCTION</scope>
</reference>
<feature type="chain" id="PRO_0000017238" description="Autophagy-related protein 8">
    <location>
        <begin position="1"/>
        <end position="116"/>
    </location>
</feature>
<feature type="propeptide" id="PRO_0000017239" description="Removed in mature form" evidence="1">
    <location>
        <begin position="117"/>
        <end position="118"/>
    </location>
</feature>
<feature type="site" description="Cleavage; by ATG4" evidence="1">
    <location>
        <begin position="116"/>
        <end position="117"/>
    </location>
</feature>
<feature type="lipid moiety-binding region" description="Phosphatidylethanolamine amidated glycine" evidence="1">
    <location>
        <position position="116"/>
    </location>
</feature>
<keyword id="KW-0072">Autophagy</keyword>
<keyword id="KW-0968">Cytoplasmic vesicle</keyword>
<keyword id="KW-0449">Lipoprotein</keyword>
<keyword id="KW-0472">Membrane</keyword>
<keyword id="KW-0653">Protein transport</keyword>
<keyword id="KW-1185">Reference proteome</keyword>
<keyword id="KW-0813">Transport</keyword>
<keyword id="KW-0833">Ubl conjugation pathway</keyword>
<keyword id="KW-0926">Vacuole</keyword>
<keyword id="KW-0843">Virulence</keyword>
<protein>
    <recommendedName>
        <fullName>Autophagy-related protein 8</fullName>
    </recommendedName>
    <alternativeName>
        <fullName>Autophagy-related ubiquitin-like modifier atg8</fullName>
    </alternativeName>
</protein>
<accession>Q4P2U6</accession>
<accession>A0A0D1DQB5</accession>
<proteinExistence type="evidence at transcript level"/>
<sequence length="118" mass="13675">MRSAFKNEHSFEKRKAEAERIRQKYPDRIPVICEKADRTDIPTIDKKKYLVPSDLTVGQFVYVIRKRIKLAPEKAIFIFVDEVLPATAALMSAIYEEHKDEDGFLYVSYSGENTFGQL</sequence>
<dbReference type="EMBL" id="CM003157">
    <property type="protein sequence ID" value="KIS66579.1"/>
    <property type="molecule type" value="Genomic_DNA"/>
</dbReference>
<dbReference type="RefSeq" id="XP_011391873.1">
    <property type="nucleotide sequence ID" value="XM_011393571.1"/>
</dbReference>
<dbReference type="SMR" id="Q4P2U6"/>
<dbReference type="FunCoup" id="Q4P2U6">
    <property type="interactions" value="249"/>
</dbReference>
<dbReference type="STRING" id="237631.Q4P2U6"/>
<dbReference type="EnsemblFungi" id="KIS66579">
    <property type="protein sequence ID" value="KIS66579"/>
    <property type="gene ID" value="UMAG_05567"/>
</dbReference>
<dbReference type="GeneID" id="23565422"/>
<dbReference type="KEGG" id="uma:UMAG_05567"/>
<dbReference type="VEuPathDB" id="FungiDB:UMAG_05567"/>
<dbReference type="eggNOG" id="KOG1654">
    <property type="taxonomic scope" value="Eukaryota"/>
</dbReference>
<dbReference type="HOGENOM" id="CLU_119276_0_1_1"/>
<dbReference type="InParanoid" id="Q4P2U6"/>
<dbReference type="OMA" id="AVYQEHK"/>
<dbReference type="OrthoDB" id="6738456at2759"/>
<dbReference type="PHI-base" id="PHI:2497"/>
<dbReference type="Proteomes" id="UP000000561">
    <property type="component" value="Chromosome 18"/>
</dbReference>
<dbReference type="GO" id="GO:0000421">
    <property type="term" value="C:autophagosome membrane"/>
    <property type="evidence" value="ECO:0000318"/>
    <property type="project" value="GO_Central"/>
</dbReference>
<dbReference type="GO" id="GO:0031410">
    <property type="term" value="C:cytoplasmic vesicle"/>
    <property type="evidence" value="ECO:0007669"/>
    <property type="project" value="UniProtKB-KW"/>
</dbReference>
<dbReference type="GO" id="GO:0000329">
    <property type="term" value="C:fungal-type vacuole membrane"/>
    <property type="evidence" value="ECO:0000318"/>
    <property type="project" value="GO_Central"/>
</dbReference>
<dbReference type="GO" id="GO:0008429">
    <property type="term" value="F:phosphatidylethanolamine binding"/>
    <property type="evidence" value="ECO:0000318"/>
    <property type="project" value="GO_Central"/>
</dbReference>
<dbReference type="GO" id="GO:0000045">
    <property type="term" value="P:autophagosome assembly"/>
    <property type="evidence" value="ECO:0000318"/>
    <property type="project" value="GO_Central"/>
</dbReference>
<dbReference type="GO" id="GO:0097352">
    <property type="term" value="P:autophagosome maturation"/>
    <property type="evidence" value="ECO:0000318"/>
    <property type="project" value="GO_Central"/>
</dbReference>
<dbReference type="GO" id="GO:0006995">
    <property type="term" value="P:cellular response to nitrogen starvation"/>
    <property type="evidence" value="ECO:0000318"/>
    <property type="project" value="GO_Central"/>
</dbReference>
<dbReference type="GO" id="GO:0000423">
    <property type="term" value="P:mitophagy"/>
    <property type="evidence" value="ECO:0000318"/>
    <property type="project" value="GO_Central"/>
</dbReference>
<dbReference type="GO" id="GO:0015031">
    <property type="term" value="P:protein transport"/>
    <property type="evidence" value="ECO:0007669"/>
    <property type="project" value="UniProtKB-KW"/>
</dbReference>
<dbReference type="CDD" id="cd16128">
    <property type="entry name" value="Ubl_ATG8"/>
    <property type="match status" value="1"/>
</dbReference>
<dbReference type="FunFam" id="3.10.20.90:FF:000010">
    <property type="entry name" value="Autophagy-related protein"/>
    <property type="match status" value="1"/>
</dbReference>
<dbReference type="Gene3D" id="3.10.20.90">
    <property type="entry name" value="Phosphatidylinositol 3-kinase Catalytic Subunit, Chain A, domain 1"/>
    <property type="match status" value="1"/>
</dbReference>
<dbReference type="InterPro" id="IPR004241">
    <property type="entry name" value="Atg8-like"/>
</dbReference>
<dbReference type="InterPro" id="IPR029071">
    <property type="entry name" value="Ubiquitin-like_domsf"/>
</dbReference>
<dbReference type="PANTHER" id="PTHR10969">
    <property type="entry name" value="MICROTUBULE-ASSOCIATED PROTEINS 1A/1B LIGHT CHAIN 3-RELATED"/>
    <property type="match status" value="1"/>
</dbReference>
<dbReference type="Pfam" id="PF02991">
    <property type="entry name" value="ATG8"/>
    <property type="match status" value="1"/>
</dbReference>
<dbReference type="SUPFAM" id="SSF54236">
    <property type="entry name" value="Ubiquitin-like"/>
    <property type="match status" value="1"/>
</dbReference>
<comment type="function">
    <text evidence="1 2 3">Ubiquitin-like modifier involved in autophagosome formation. With ATG4, mediates the delivery of the autophagosomes to the vacuole via the microtubule cytoskeleton. Also participates in membrane fusion events that take place in the early secretory pathway. Also involved in endoplasmic reticulum-specific autophagic process and is essential for the survival of cells subjected to severe ER stress. The ATG8-PE conjugate mediates tethering between adjacent membranes and stimulates membrane hemifusion, leading to expansion of the autophagosomal membrane during autophagy (By similarity). Required for selective autophagic degradation of the mitochondria (mitophagy) which contributes to regulate mitochondrial quantity and quality by eliminating the mitochondria to a basal level to fulfill cellular energy requirements and preventing excess ROS production. Required for wild-type budding of haploid sporidia and for complete symptom development during pathogenic growth such as gall formation and teliospore production in ears of mature maize (PubMed:20618705, PubMed:22843561).</text>
</comment>
<comment type="subunit">
    <text>Conjugation to phosphatidylethanolamine (PE) leads to homodimerization. Interacts with ATG1, ATG3, ATG4, ATG7, ATG12, ATG32, ATG34 and the C-terminal 10 residues domain of ATG19. Also interacts with the endoplasmic reticulum to Golgi v-SNARE protein BET1 and the vacuolar v-SNARE protein NYV1. Interacts with the UBX domain-containing protein SHP1.</text>
</comment>
<comment type="subcellular location">
    <subcellularLocation>
        <location evidence="1">Cytoplasmic vesicle</location>
        <location evidence="1">Autophagosome membrane</location>
        <topology evidence="1">Lipid-anchor</topology>
    </subcellularLocation>
    <subcellularLocation>
        <location evidence="1">Vacuole membrane</location>
        <topology evidence="1">Lipid-anchor</topology>
    </subcellularLocation>
</comment>
<comment type="induction">
    <text evidence="2">Transcripts accumulate during carbon stress conditions.</text>
</comment>
<comment type="PTM">
    <text evidence="1">The C-terminal 2 residues are removed by ATG4 to expose Gly-116 at the C-terminus. The C-terminal Gly is then amidated with phosphatidylethanolamine by an activating system similar to that for ubiquitin.</text>
</comment>
<comment type="disruption phenotype">
    <text evidence="2">Prevents vacuolar accumulation of autophagosomes and affects survival during carbon starvation.</text>
</comment>
<comment type="similarity">
    <text evidence="4">Belongs to the ATG8 family.</text>
</comment>
<evidence type="ECO:0000250" key="1">
    <source>
        <dbReference type="UniProtKB" id="P38182"/>
    </source>
</evidence>
<evidence type="ECO:0000269" key="2">
    <source>
    </source>
</evidence>
<evidence type="ECO:0000269" key="3">
    <source>
    </source>
</evidence>
<evidence type="ECO:0000305" key="4"/>